<name>CH60_BURTH</name>
<comment type="function">
    <text evidence="1">Together with its co-chaperonin GroES, plays an essential role in assisting protein folding. The GroEL-GroES system forms a nano-cage that allows encapsulation of the non-native substrate proteins and provides a physical environment optimized to promote and accelerate protein folding.</text>
</comment>
<comment type="catalytic activity">
    <reaction evidence="1">
        <text>ATP + H2O + a folded polypeptide = ADP + phosphate + an unfolded polypeptide.</text>
        <dbReference type="EC" id="5.6.1.7"/>
    </reaction>
</comment>
<comment type="subunit">
    <text evidence="1">Forms a cylinder of 14 subunits composed of two heptameric rings stacked back-to-back. Interacts with the co-chaperonin GroES.</text>
</comment>
<comment type="subcellular location">
    <subcellularLocation>
        <location evidence="1">Cytoplasm</location>
    </subcellularLocation>
</comment>
<comment type="similarity">
    <text evidence="1">Belongs to the chaperonin (HSP60) family.</text>
</comment>
<dbReference type="EC" id="5.6.1.7" evidence="1"/>
<dbReference type="EMBL" id="AF454383">
    <property type="protein sequence ID" value="AAL49762.1"/>
    <property type="molecule type" value="Genomic_DNA"/>
</dbReference>
<dbReference type="RefSeq" id="WP_009904192.1">
    <property type="nucleotide sequence ID" value="NZ_WVUL01000001.1"/>
</dbReference>
<dbReference type="SMR" id="P58723"/>
<dbReference type="GeneID" id="45121199"/>
<dbReference type="OMA" id="PYILIHQ"/>
<dbReference type="OrthoDB" id="9766614at2"/>
<dbReference type="GO" id="GO:0005737">
    <property type="term" value="C:cytoplasm"/>
    <property type="evidence" value="ECO:0007669"/>
    <property type="project" value="UniProtKB-SubCell"/>
</dbReference>
<dbReference type="GO" id="GO:0005524">
    <property type="term" value="F:ATP binding"/>
    <property type="evidence" value="ECO:0007669"/>
    <property type="project" value="UniProtKB-UniRule"/>
</dbReference>
<dbReference type="GO" id="GO:0140662">
    <property type="term" value="F:ATP-dependent protein folding chaperone"/>
    <property type="evidence" value="ECO:0007669"/>
    <property type="project" value="InterPro"/>
</dbReference>
<dbReference type="GO" id="GO:0016853">
    <property type="term" value="F:isomerase activity"/>
    <property type="evidence" value="ECO:0007669"/>
    <property type="project" value="UniProtKB-KW"/>
</dbReference>
<dbReference type="GO" id="GO:0051082">
    <property type="term" value="F:unfolded protein binding"/>
    <property type="evidence" value="ECO:0007669"/>
    <property type="project" value="UniProtKB-UniRule"/>
</dbReference>
<dbReference type="GO" id="GO:0042026">
    <property type="term" value="P:protein refolding"/>
    <property type="evidence" value="ECO:0007669"/>
    <property type="project" value="UniProtKB-UniRule"/>
</dbReference>
<dbReference type="CDD" id="cd03344">
    <property type="entry name" value="GroEL"/>
    <property type="match status" value="1"/>
</dbReference>
<dbReference type="FunFam" id="1.10.560.10:FF:000001">
    <property type="entry name" value="60 kDa chaperonin"/>
    <property type="match status" value="1"/>
</dbReference>
<dbReference type="FunFam" id="3.50.7.10:FF:000001">
    <property type="entry name" value="60 kDa chaperonin"/>
    <property type="match status" value="1"/>
</dbReference>
<dbReference type="Gene3D" id="3.50.7.10">
    <property type="entry name" value="GroEL"/>
    <property type="match status" value="1"/>
</dbReference>
<dbReference type="Gene3D" id="1.10.560.10">
    <property type="entry name" value="GroEL-like equatorial domain"/>
    <property type="match status" value="1"/>
</dbReference>
<dbReference type="Gene3D" id="3.30.260.10">
    <property type="entry name" value="TCP-1-like chaperonin intermediate domain"/>
    <property type="match status" value="1"/>
</dbReference>
<dbReference type="HAMAP" id="MF_00600">
    <property type="entry name" value="CH60"/>
    <property type="match status" value="1"/>
</dbReference>
<dbReference type="InterPro" id="IPR018370">
    <property type="entry name" value="Chaperonin_Cpn60_CS"/>
</dbReference>
<dbReference type="InterPro" id="IPR001844">
    <property type="entry name" value="Cpn60/GroEL"/>
</dbReference>
<dbReference type="InterPro" id="IPR002423">
    <property type="entry name" value="Cpn60/GroEL/TCP-1"/>
</dbReference>
<dbReference type="InterPro" id="IPR027409">
    <property type="entry name" value="GroEL-like_apical_dom_sf"/>
</dbReference>
<dbReference type="InterPro" id="IPR027413">
    <property type="entry name" value="GROEL-like_equatorial_sf"/>
</dbReference>
<dbReference type="InterPro" id="IPR027410">
    <property type="entry name" value="TCP-1-like_intermed_sf"/>
</dbReference>
<dbReference type="NCBIfam" id="TIGR02348">
    <property type="entry name" value="GroEL"/>
    <property type="match status" value="1"/>
</dbReference>
<dbReference type="NCBIfam" id="NF000592">
    <property type="entry name" value="PRK00013.1"/>
    <property type="match status" value="1"/>
</dbReference>
<dbReference type="NCBIfam" id="NF009487">
    <property type="entry name" value="PRK12849.1"/>
    <property type="match status" value="1"/>
</dbReference>
<dbReference type="NCBIfam" id="NF009488">
    <property type="entry name" value="PRK12850.1"/>
    <property type="match status" value="1"/>
</dbReference>
<dbReference type="NCBIfam" id="NF009489">
    <property type="entry name" value="PRK12851.1"/>
    <property type="match status" value="1"/>
</dbReference>
<dbReference type="PANTHER" id="PTHR45633">
    <property type="entry name" value="60 KDA HEAT SHOCK PROTEIN, MITOCHONDRIAL"/>
    <property type="match status" value="1"/>
</dbReference>
<dbReference type="Pfam" id="PF00118">
    <property type="entry name" value="Cpn60_TCP1"/>
    <property type="match status" value="1"/>
</dbReference>
<dbReference type="PRINTS" id="PR00298">
    <property type="entry name" value="CHAPERONIN60"/>
</dbReference>
<dbReference type="SUPFAM" id="SSF52029">
    <property type="entry name" value="GroEL apical domain-like"/>
    <property type="match status" value="1"/>
</dbReference>
<dbReference type="SUPFAM" id="SSF48592">
    <property type="entry name" value="GroEL equatorial domain-like"/>
    <property type="match status" value="1"/>
</dbReference>
<dbReference type="SUPFAM" id="SSF54849">
    <property type="entry name" value="GroEL-intermediate domain like"/>
    <property type="match status" value="1"/>
</dbReference>
<dbReference type="PROSITE" id="PS00296">
    <property type="entry name" value="CHAPERONINS_CPN60"/>
    <property type="match status" value="1"/>
</dbReference>
<proteinExistence type="inferred from homology"/>
<reference key="1">
    <citation type="journal article" date="2002" name="Diagn. Microbiol. Infect. Dis.">
        <title>Single gene target bacterial identification. GroEL gene sequencing for discriminating clinical isolates of Burkholderia pseudomallei and Burkholderia thailandensis.</title>
        <authorList>
            <person name="Woo P.C.Y."/>
            <person name="Woo G.K.S."/>
            <person name="Lau S.K.P."/>
            <person name="Wong S.S.Y."/>
            <person name="Yuen K.-Y."/>
        </authorList>
    </citation>
    <scope>NUCLEOTIDE SEQUENCE [GENOMIC DNA]</scope>
</reference>
<organism>
    <name type="scientific">Burkholderia thailandensis</name>
    <dbReference type="NCBI Taxonomy" id="57975"/>
    <lineage>
        <taxon>Bacteria</taxon>
        <taxon>Pseudomonadati</taxon>
        <taxon>Pseudomonadota</taxon>
        <taxon>Betaproteobacteria</taxon>
        <taxon>Burkholderiales</taxon>
        <taxon>Burkholderiaceae</taxon>
        <taxon>Burkholderia</taxon>
        <taxon>pseudomallei group</taxon>
    </lineage>
</organism>
<accession>P58723</accession>
<sequence length="546" mass="57146">MAAKDVVFGDSARAKMVEGVNILANAVKVTLGPKGRNVVLERSFGGPTVTKDGVSVAKEIELKDKLQNMGAQMVKEVASKTSDNAGDGTTTATVLAQSIVREGMKYVASGMNPMDLKRGIDKAVAAAVEELKKISKPCTTNKEIAQVGSISANSDSSIGDRIAEAMDKVGKEGVITVEDGKSLADELDVVEGMQFDRGYLSPYFINNPDKQVAVLENPFVLLHDKKVSNIRDLLPVLEQVAKAGRPLLIIAEDVEGEALATLVVNNIRGILKTVAVKAPGFGDRRKAMLEDIAILTGGQVIAEETGLTLEKATLAELGQAKRIEVGKENTTIIDGAGEAVNIEARVKQIRTQIEEATSDYDREKLQERVAKLAGGVAVIKVGAATEVEMKEKKARVEDALHATRAAVEEGIVPGGGVALIRARTAIAALTGVNADQNAGIKIVLRAMEEPLRQIVTNGGEEASVVVAAVAAGKGNYGYNAATGEYVDMVEAGVVDPTKVTRTALQNAASVAGLLLTTDAAVAELPKEDAPMPGGMPGGMGGMGMDM</sequence>
<protein>
    <recommendedName>
        <fullName evidence="1">Chaperonin GroEL</fullName>
        <ecNumber evidence="1">5.6.1.7</ecNumber>
    </recommendedName>
    <alternativeName>
        <fullName evidence="1">60 kDa chaperonin</fullName>
    </alternativeName>
    <alternativeName>
        <fullName evidence="1">Chaperonin-60</fullName>
        <shortName evidence="1">Cpn60</shortName>
    </alternativeName>
</protein>
<keyword id="KW-0067">ATP-binding</keyword>
<keyword id="KW-0143">Chaperone</keyword>
<keyword id="KW-0963">Cytoplasm</keyword>
<keyword id="KW-0413">Isomerase</keyword>
<keyword id="KW-0547">Nucleotide-binding</keyword>
<evidence type="ECO:0000255" key="1">
    <source>
        <dbReference type="HAMAP-Rule" id="MF_00600"/>
    </source>
</evidence>
<evidence type="ECO:0000256" key="2">
    <source>
        <dbReference type="SAM" id="MobiDB-lite"/>
    </source>
</evidence>
<gene>
    <name evidence="1" type="primary">groEL</name>
    <name evidence="1" type="synonym">groL</name>
</gene>
<feature type="chain" id="PRO_0000063320" description="Chaperonin GroEL">
    <location>
        <begin position="1"/>
        <end position="546"/>
    </location>
</feature>
<feature type="region of interest" description="Disordered" evidence="2">
    <location>
        <begin position="526"/>
        <end position="546"/>
    </location>
</feature>
<feature type="compositionally biased region" description="Gly residues" evidence="2">
    <location>
        <begin position="534"/>
        <end position="546"/>
    </location>
</feature>
<feature type="binding site" evidence="1">
    <location>
        <begin position="30"/>
        <end position="33"/>
    </location>
    <ligand>
        <name>ATP</name>
        <dbReference type="ChEBI" id="CHEBI:30616"/>
    </ligand>
</feature>
<feature type="binding site" evidence="1">
    <location>
        <position position="51"/>
    </location>
    <ligand>
        <name>ATP</name>
        <dbReference type="ChEBI" id="CHEBI:30616"/>
    </ligand>
</feature>
<feature type="binding site" evidence="1">
    <location>
        <begin position="87"/>
        <end position="91"/>
    </location>
    <ligand>
        <name>ATP</name>
        <dbReference type="ChEBI" id="CHEBI:30616"/>
    </ligand>
</feature>
<feature type="binding site" evidence="1">
    <location>
        <position position="415"/>
    </location>
    <ligand>
        <name>ATP</name>
        <dbReference type="ChEBI" id="CHEBI:30616"/>
    </ligand>
</feature>
<feature type="binding site" evidence="1">
    <location>
        <begin position="479"/>
        <end position="481"/>
    </location>
    <ligand>
        <name>ATP</name>
        <dbReference type="ChEBI" id="CHEBI:30616"/>
    </ligand>
</feature>
<feature type="binding site" evidence="1">
    <location>
        <position position="495"/>
    </location>
    <ligand>
        <name>ATP</name>
        <dbReference type="ChEBI" id="CHEBI:30616"/>
    </ligand>
</feature>